<proteinExistence type="inferred from homology"/>
<dbReference type="EC" id="5.3.1.1" evidence="1"/>
<dbReference type="EMBL" id="AP006878">
    <property type="protein sequence ID" value="BAD86318.1"/>
    <property type="molecule type" value="Genomic_DNA"/>
</dbReference>
<dbReference type="RefSeq" id="WP_011251079.1">
    <property type="nucleotide sequence ID" value="NC_006624.1"/>
</dbReference>
<dbReference type="SMR" id="Q5JHG3"/>
<dbReference type="FunCoup" id="Q5JHG3">
    <property type="interactions" value="205"/>
</dbReference>
<dbReference type="STRING" id="69014.TK2129"/>
<dbReference type="EnsemblBacteria" id="BAD86318">
    <property type="protein sequence ID" value="BAD86318"/>
    <property type="gene ID" value="TK2129"/>
</dbReference>
<dbReference type="GeneID" id="78448664"/>
<dbReference type="KEGG" id="tko:TK2129"/>
<dbReference type="PATRIC" id="fig|69014.16.peg.2085"/>
<dbReference type="eggNOG" id="arCOG01087">
    <property type="taxonomic scope" value="Archaea"/>
</dbReference>
<dbReference type="HOGENOM" id="CLU_104921_0_0_2"/>
<dbReference type="InParanoid" id="Q5JHG3"/>
<dbReference type="OrthoDB" id="9465at2157"/>
<dbReference type="PhylomeDB" id="Q5JHG3"/>
<dbReference type="UniPathway" id="UPA00109">
    <property type="reaction ID" value="UER00189"/>
</dbReference>
<dbReference type="UniPathway" id="UPA00138"/>
<dbReference type="Proteomes" id="UP000000536">
    <property type="component" value="Chromosome"/>
</dbReference>
<dbReference type="GO" id="GO:0005829">
    <property type="term" value="C:cytosol"/>
    <property type="evidence" value="ECO:0000318"/>
    <property type="project" value="GO_Central"/>
</dbReference>
<dbReference type="GO" id="GO:0004807">
    <property type="term" value="F:triose-phosphate isomerase activity"/>
    <property type="evidence" value="ECO:0000318"/>
    <property type="project" value="GO_Central"/>
</dbReference>
<dbReference type="GO" id="GO:0006094">
    <property type="term" value="P:gluconeogenesis"/>
    <property type="evidence" value="ECO:0000318"/>
    <property type="project" value="GO_Central"/>
</dbReference>
<dbReference type="GO" id="GO:0046166">
    <property type="term" value="P:glyceraldehyde-3-phosphate biosynthetic process"/>
    <property type="evidence" value="ECO:0000318"/>
    <property type="project" value="GO_Central"/>
</dbReference>
<dbReference type="GO" id="GO:0019563">
    <property type="term" value="P:glycerol catabolic process"/>
    <property type="evidence" value="ECO:0000318"/>
    <property type="project" value="GO_Central"/>
</dbReference>
<dbReference type="GO" id="GO:0006096">
    <property type="term" value="P:glycolytic process"/>
    <property type="evidence" value="ECO:0000318"/>
    <property type="project" value="GO_Central"/>
</dbReference>
<dbReference type="CDD" id="cd00311">
    <property type="entry name" value="TIM"/>
    <property type="match status" value="1"/>
</dbReference>
<dbReference type="FunFam" id="3.20.20.70:FF:000223">
    <property type="entry name" value="Triosephosphate isomerase"/>
    <property type="match status" value="1"/>
</dbReference>
<dbReference type="Gene3D" id="3.20.20.70">
    <property type="entry name" value="Aldolase class I"/>
    <property type="match status" value="1"/>
</dbReference>
<dbReference type="HAMAP" id="MF_00147_A">
    <property type="entry name" value="TIM_A"/>
    <property type="match status" value="1"/>
</dbReference>
<dbReference type="InterPro" id="IPR013785">
    <property type="entry name" value="Aldolase_TIM"/>
</dbReference>
<dbReference type="InterPro" id="IPR035990">
    <property type="entry name" value="TIM_sf"/>
</dbReference>
<dbReference type="InterPro" id="IPR000652">
    <property type="entry name" value="Triosephosphate_isomerase"/>
</dbReference>
<dbReference type="InterPro" id="IPR022891">
    <property type="entry name" value="Triosephosphate_isomerase_arc"/>
</dbReference>
<dbReference type="InterPro" id="IPR020861">
    <property type="entry name" value="Triosephosphate_isomerase_AS"/>
</dbReference>
<dbReference type="NCBIfam" id="NF003302">
    <property type="entry name" value="PRK04302.1"/>
    <property type="match status" value="1"/>
</dbReference>
<dbReference type="NCBIfam" id="TIGR00419">
    <property type="entry name" value="tim"/>
    <property type="match status" value="1"/>
</dbReference>
<dbReference type="PANTHER" id="PTHR21139">
    <property type="entry name" value="TRIOSEPHOSPHATE ISOMERASE"/>
    <property type="match status" value="1"/>
</dbReference>
<dbReference type="PANTHER" id="PTHR21139:SF42">
    <property type="entry name" value="TRIOSEPHOSPHATE ISOMERASE"/>
    <property type="match status" value="1"/>
</dbReference>
<dbReference type="Pfam" id="PF00121">
    <property type="entry name" value="TIM"/>
    <property type="match status" value="1"/>
</dbReference>
<dbReference type="SUPFAM" id="SSF51351">
    <property type="entry name" value="Triosephosphate isomerase (TIM)"/>
    <property type="match status" value="1"/>
</dbReference>
<dbReference type="PROSITE" id="PS00171">
    <property type="entry name" value="TIM_1"/>
    <property type="match status" value="1"/>
</dbReference>
<dbReference type="PROSITE" id="PS51440">
    <property type="entry name" value="TIM_2"/>
    <property type="match status" value="1"/>
</dbReference>
<feature type="chain" id="PRO_0000090343" description="Triosephosphate isomerase">
    <location>
        <begin position="1"/>
        <end position="226"/>
    </location>
</feature>
<feature type="active site" description="Electrophile" evidence="1">
    <location>
        <position position="96"/>
    </location>
</feature>
<feature type="active site" description="Proton acceptor" evidence="1">
    <location>
        <position position="144"/>
    </location>
</feature>
<feature type="binding site" evidence="1">
    <location>
        <begin position="12"/>
        <end position="14"/>
    </location>
    <ligand>
        <name>substrate</name>
    </ligand>
</feature>
<feature type="binding site" evidence="1">
    <location>
        <position position="149"/>
    </location>
    <ligand>
        <name>substrate</name>
    </ligand>
</feature>
<feature type="binding site" evidence="1">
    <location>
        <position position="184"/>
    </location>
    <ligand>
        <name>substrate</name>
    </ligand>
</feature>
<feature type="binding site" evidence="1">
    <location>
        <begin position="205"/>
        <end position="206"/>
    </location>
    <ligand>
        <name>substrate</name>
    </ligand>
</feature>
<keyword id="KW-0963">Cytoplasm</keyword>
<keyword id="KW-0312">Gluconeogenesis</keyword>
<keyword id="KW-0324">Glycolysis</keyword>
<keyword id="KW-0413">Isomerase</keyword>
<keyword id="KW-1185">Reference proteome</keyword>
<protein>
    <recommendedName>
        <fullName evidence="1">Triosephosphate isomerase</fullName>
        <shortName evidence="1">TIM</shortName>
        <shortName evidence="1">TPI</shortName>
        <ecNumber evidence="1">5.3.1.1</ecNumber>
    </recommendedName>
    <alternativeName>
        <fullName evidence="1">Triose-phosphate isomerase</fullName>
    </alternativeName>
</protein>
<sequence>MAKLKEPIIAINFKTYIEATGKRALEIAKAAERVWKETGITIVVAPQLADLRMIAESVEIPVFAQHIDPIKPGSHTGHVLPEAVKEVGAVGTLLNHSENRMILADLEAAIRRAEEVGLMTMVCSNNPAVSAAVAALGPDYVAVEPPELIGTGIPVSKAKPEVVTNTVELVKKVNPDVGVLTGAGISTGEDVKKALELGSVGVLLASGVTKAKDPENAIRDLVSLII</sequence>
<evidence type="ECO:0000255" key="1">
    <source>
        <dbReference type="HAMAP-Rule" id="MF_00147"/>
    </source>
</evidence>
<reference key="1">
    <citation type="journal article" date="2005" name="Genome Res.">
        <title>Complete genome sequence of the hyperthermophilic archaeon Thermococcus kodakaraensis KOD1 and comparison with Pyrococcus genomes.</title>
        <authorList>
            <person name="Fukui T."/>
            <person name="Atomi H."/>
            <person name="Kanai T."/>
            <person name="Matsumi R."/>
            <person name="Fujiwara S."/>
            <person name="Imanaka T."/>
        </authorList>
    </citation>
    <scope>NUCLEOTIDE SEQUENCE [LARGE SCALE GENOMIC DNA]</scope>
    <source>
        <strain>ATCC BAA-918 / JCM 12380 / KOD1</strain>
    </source>
</reference>
<accession>Q5JHG3</accession>
<comment type="function">
    <text evidence="1">Involved in the gluconeogenesis. Catalyzes stereospecifically the conversion of dihydroxyacetone phosphate (DHAP) to D-glyceraldehyde-3-phosphate (G3P).</text>
</comment>
<comment type="catalytic activity">
    <reaction evidence="1">
        <text>D-glyceraldehyde 3-phosphate = dihydroxyacetone phosphate</text>
        <dbReference type="Rhea" id="RHEA:18585"/>
        <dbReference type="ChEBI" id="CHEBI:57642"/>
        <dbReference type="ChEBI" id="CHEBI:59776"/>
        <dbReference type="EC" id="5.3.1.1"/>
    </reaction>
</comment>
<comment type="pathway">
    <text evidence="1">Carbohydrate biosynthesis; gluconeogenesis.</text>
</comment>
<comment type="pathway">
    <text evidence="1">Carbohydrate degradation; glycolysis; D-glyceraldehyde 3-phosphate from glycerone phosphate: step 1/1.</text>
</comment>
<comment type="subunit">
    <text evidence="1">Homotetramer; dimer of dimers.</text>
</comment>
<comment type="subcellular location">
    <subcellularLocation>
        <location evidence="1">Cytoplasm</location>
    </subcellularLocation>
</comment>
<comment type="similarity">
    <text evidence="1">Belongs to the triosephosphate isomerase family.</text>
</comment>
<organism>
    <name type="scientific">Thermococcus kodakarensis (strain ATCC BAA-918 / JCM 12380 / KOD1)</name>
    <name type="common">Pyrococcus kodakaraensis (strain KOD1)</name>
    <dbReference type="NCBI Taxonomy" id="69014"/>
    <lineage>
        <taxon>Archaea</taxon>
        <taxon>Methanobacteriati</taxon>
        <taxon>Methanobacteriota</taxon>
        <taxon>Thermococci</taxon>
        <taxon>Thermococcales</taxon>
        <taxon>Thermococcaceae</taxon>
        <taxon>Thermococcus</taxon>
    </lineage>
</organism>
<name>TPIS_THEKO</name>
<gene>
    <name evidence="1" type="primary">tpiA</name>
    <name type="ordered locus">TK2129</name>
</gene>